<dbReference type="EMBL" id="CP000076">
    <property type="protein sequence ID" value="AAY93156.1"/>
    <property type="molecule type" value="Genomic_DNA"/>
</dbReference>
<dbReference type="RefSeq" id="WP_011062179.1">
    <property type="nucleotide sequence ID" value="NC_004129.6"/>
</dbReference>
<dbReference type="SMR" id="Q4K9U1"/>
<dbReference type="STRING" id="220664.PFL_3892"/>
<dbReference type="KEGG" id="pfl:PFL_3892"/>
<dbReference type="PATRIC" id="fig|220664.5.peg.3987"/>
<dbReference type="eggNOG" id="COG2915">
    <property type="taxonomic scope" value="Bacteria"/>
</dbReference>
<dbReference type="HOGENOM" id="CLU_098920_0_0_6"/>
<dbReference type="Proteomes" id="UP000008540">
    <property type="component" value="Chromosome"/>
</dbReference>
<dbReference type="GO" id="GO:0005737">
    <property type="term" value="C:cytoplasm"/>
    <property type="evidence" value="ECO:0007669"/>
    <property type="project" value="UniProtKB-SubCell"/>
</dbReference>
<dbReference type="GO" id="GO:0005886">
    <property type="term" value="C:plasma membrane"/>
    <property type="evidence" value="ECO:0007669"/>
    <property type="project" value="UniProtKB-SubCell"/>
</dbReference>
<dbReference type="Gene3D" id="1.10.3890.10">
    <property type="entry name" value="HflD-like"/>
    <property type="match status" value="1"/>
</dbReference>
<dbReference type="HAMAP" id="MF_00695">
    <property type="entry name" value="HflD_protein"/>
    <property type="match status" value="1"/>
</dbReference>
<dbReference type="InterPro" id="IPR007451">
    <property type="entry name" value="HflD"/>
</dbReference>
<dbReference type="InterPro" id="IPR035932">
    <property type="entry name" value="HflD-like_sf"/>
</dbReference>
<dbReference type="NCBIfam" id="NF001246">
    <property type="entry name" value="PRK00218.1-2"/>
    <property type="match status" value="1"/>
</dbReference>
<dbReference type="NCBIfam" id="NF001247">
    <property type="entry name" value="PRK00218.1-3"/>
    <property type="match status" value="1"/>
</dbReference>
<dbReference type="PANTHER" id="PTHR38100">
    <property type="entry name" value="HIGH FREQUENCY LYSOGENIZATION PROTEIN HFLD"/>
    <property type="match status" value="1"/>
</dbReference>
<dbReference type="PANTHER" id="PTHR38100:SF1">
    <property type="entry name" value="HIGH FREQUENCY LYSOGENIZATION PROTEIN HFLD"/>
    <property type="match status" value="1"/>
</dbReference>
<dbReference type="Pfam" id="PF04356">
    <property type="entry name" value="DUF489"/>
    <property type="match status" value="1"/>
</dbReference>
<dbReference type="SUPFAM" id="SSF101322">
    <property type="entry name" value="YcfC-like"/>
    <property type="match status" value="1"/>
</dbReference>
<protein>
    <recommendedName>
        <fullName evidence="1">High frequency lysogenization protein HflD homolog</fullName>
    </recommendedName>
</protein>
<feature type="chain" id="PRO_1000045431" description="High frequency lysogenization protein HflD homolog">
    <location>
        <begin position="1"/>
        <end position="207"/>
    </location>
</feature>
<keyword id="KW-0997">Cell inner membrane</keyword>
<keyword id="KW-1003">Cell membrane</keyword>
<keyword id="KW-0963">Cytoplasm</keyword>
<keyword id="KW-0472">Membrane</keyword>
<accession>Q4K9U1</accession>
<organism>
    <name type="scientific">Pseudomonas fluorescens (strain ATCC BAA-477 / NRRL B-23932 / Pf-5)</name>
    <dbReference type="NCBI Taxonomy" id="220664"/>
    <lineage>
        <taxon>Bacteria</taxon>
        <taxon>Pseudomonadati</taxon>
        <taxon>Pseudomonadota</taxon>
        <taxon>Gammaproteobacteria</taxon>
        <taxon>Pseudomonadales</taxon>
        <taxon>Pseudomonadaceae</taxon>
        <taxon>Pseudomonas</taxon>
    </lineage>
</organism>
<evidence type="ECO:0000255" key="1">
    <source>
        <dbReference type="HAMAP-Rule" id="MF_00695"/>
    </source>
</evidence>
<proteinExistence type="inferred from homology"/>
<comment type="subcellular location">
    <subcellularLocation>
        <location>Cytoplasm</location>
    </subcellularLocation>
    <subcellularLocation>
        <location evidence="1">Cell inner membrane</location>
        <topology evidence="1">Peripheral membrane protein</topology>
        <orientation evidence="1">Cytoplasmic side</orientation>
    </subcellularLocation>
</comment>
<comment type="similarity">
    <text evidence="1">Belongs to the HflD family.</text>
</comment>
<reference key="1">
    <citation type="journal article" date="2005" name="Nat. Biotechnol.">
        <title>Complete genome sequence of the plant commensal Pseudomonas fluorescens Pf-5.</title>
        <authorList>
            <person name="Paulsen I.T."/>
            <person name="Press C.M."/>
            <person name="Ravel J."/>
            <person name="Kobayashi D.Y."/>
            <person name="Myers G.S.A."/>
            <person name="Mavrodi D.V."/>
            <person name="DeBoy R.T."/>
            <person name="Seshadri R."/>
            <person name="Ren Q."/>
            <person name="Madupu R."/>
            <person name="Dodson R.J."/>
            <person name="Durkin A.S."/>
            <person name="Brinkac L.M."/>
            <person name="Daugherty S.C."/>
            <person name="Sullivan S.A."/>
            <person name="Rosovitz M.J."/>
            <person name="Gwinn M.L."/>
            <person name="Zhou L."/>
            <person name="Schneider D.J."/>
            <person name="Cartinhour S.W."/>
            <person name="Nelson W.C."/>
            <person name="Weidman J."/>
            <person name="Watkins K."/>
            <person name="Tran K."/>
            <person name="Khouri H."/>
            <person name="Pierson E.A."/>
            <person name="Pierson L.S. III"/>
            <person name="Thomashow L.S."/>
            <person name="Loper J.E."/>
        </authorList>
    </citation>
    <scope>NUCLEOTIDE SEQUENCE [LARGE SCALE GENOMIC DNA]</scope>
    <source>
        <strain>ATCC BAA-477 / NRRL B-23932 / Pf-5</strain>
    </source>
</reference>
<gene>
    <name evidence="1" type="primary">hflD</name>
    <name type="ordered locus">PFL_3892</name>
</gene>
<sequence length="207" mass="23131">MSPIQEQLTALGGVFLAAVLVDRIAKTGQVSEAALSCMLGSLLIRDPKDTLEVYGGDDINLREGYRALIGALERDPSTLQREPLRYALSMLGLERQLAKRDDLLETIGKRLPQIQSQVEHFGPAHENVIAACGGLYQDTLSTLRQRIQVHGDMRNLQQPSNASKIRALLLAGIRSARLWRQLGGHRWQLVISRRKLLKELYPLMRSS</sequence>
<name>HFLD_PSEF5</name>